<proteinExistence type="inferred from homology"/>
<comment type="function">
    <text evidence="1">Catalyzes the base-exchange of a guanine (G) residue with the queuine precursor 7-aminomethyl-7-deazaguanine (PreQ1) at position 34 (anticodon wobble position) in tRNAs with GU(N) anticodons (tRNA-Asp, -Asn, -His and -Tyr). Catalysis occurs through a double-displacement mechanism. The nucleophile active site attacks the C1' of nucleotide 34 to detach the guanine base from the RNA, forming a covalent enzyme-RNA intermediate. The proton acceptor active site deprotonates the incoming PreQ1, allowing a nucleophilic attack on the C1' of the ribose to form the product. After dissociation, two additional enzymatic reactions on the tRNA convert PreQ1 to queuine (Q), resulting in the hypermodified nucleoside queuosine (7-(((4,5-cis-dihydroxy-2-cyclopenten-1-yl)amino)methyl)-7-deazaguanosine).</text>
</comment>
<comment type="catalytic activity">
    <reaction evidence="1">
        <text>7-aminomethyl-7-carbaguanine + guanosine(34) in tRNA = 7-aminomethyl-7-carbaguanosine(34) in tRNA + guanine</text>
        <dbReference type="Rhea" id="RHEA:24104"/>
        <dbReference type="Rhea" id="RHEA-COMP:10341"/>
        <dbReference type="Rhea" id="RHEA-COMP:10342"/>
        <dbReference type="ChEBI" id="CHEBI:16235"/>
        <dbReference type="ChEBI" id="CHEBI:58703"/>
        <dbReference type="ChEBI" id="CHEBI:74269"/>
        <dbReference type="ChEBI" id="CHEBI:82833"/>
        <dbReference type="EC" id="2.4.2.29"/>
    </reaction>
</comment>
<comment type="cofactor">
    <cofactor evidence="1">
        <name>Zn(2+)</name>
        <dbReference type="ChEBI" id="CHEBI:29105"/>
    </cofactor>
    <text evidence="1">Binds 1 zinc ion per subunit.</text>
</comment>
<comment type="pathway">
    <text evidence="1">tRNA modification; tRNA-queuosine biosynthesis.</text>
</comment>
<comment type="subunit">
    <text evidence="1">Homodimer. Within each dimer, one monomer is responsible for RNA recognition and catalysis, while the other monomer binds to the replacement base PreQ1.</text>
</comment>
<comment type="similarity">
    <text evidence="1">Belongs to the queuine tRNA-ribosyltransferase family.</text>
</comment>
<dbReference type="EC" id="2.4.2.29" evidence="1"/>
<dbReference type="EMBL" id="FM200053">
    <property type="protein sequence ID" value="CAR60371.1"/>
    <property type="molecule type" value="Genomic_DNA"/>
</dbReference>
<dbReference type="RefSeq" id="WP_000667307.1">
    <property type="nucleotide sequence ID" value="NC_011147.1"/>
</dbReference>
<dbReference type="SMR" id="B5BDC8"/>
<dbReference type="KEGG" id="sek:SSPA2161"/>
<dbReference type="HOGENOM" id="CLU_022060_0_1_6"/>
<dbReference type="UniPathway" id="UPA00392"/>
<dbReference type="Proteomes" id="UP000001869">
    <property type="component" value="Chromosome"/>
</dbReference>
<dbReference type="GO" id="GO:0005829">
    <property type="term" value="C:cytosol"/>
    <property type="evidence" value="ECO:0007669"/>
    <property type="project" value="TreeGrafter"/>
</dbReference>
<dbReference type="GO" id="GO:0046872">
    <property type="term" value="F:metal ion binding"/>
    <property type="evidence" value="ECO:0007669"/>
    <property type="project" value="UniProtKB-KW"/>
</dbReference>
<dbReference type="GO" id="GO:0008479">
    <property type="term" value="F:tRNA-guanosine(34) queuine transglycosylase activity"/>
    <property type="evidence" value="ECO:0007669"/>
    <property type="project" value="UniProtKB-UniRule"/>
</dbReference>
<dbReference type="GO" id="GO:0008616">
    <property type="term" value="P:queuosine biosynthetic process"/>
    <property type="evidence" value="ECO:0007669"/>
    <property type="project" value="UniProtKB-UniRule"/>
</dbReference>
<dbReference type="GO" id="GO:0002099">
    <property type="term" value="P:tRNA wobble guanine modification"/>
    <property type="evidence" value="ECO:0007669"/>
    <property type="project" value="TreeGrafter"/>
</dbReference>
<dbReference type="GO" id="GO:0101030">
    <property type="term" value="P:tRNA-guanine transglycosylation"/>
    <property type="evidence" value="ECO:0007669"/>
    <property type="project" value="InterPro"/>
</dbReference>
<dbReference type="FunFam" id="3.20.20.105:FF:000001">
    <property type="entry name" value="Queuine tRNA-ribosyltransferase"/>
    <property type="match status" value="1"/>
</dbReference>
<dbReference type="Gene3D" id="3.20.20.105">
    <property type="entry name" value="Queuine tRNA-ribosyltransferase-like"/>
    <property type="match status" value="1"/>
</dbReference>
<dbReference type="HAMAP" id="MF_00168">
    <property type="entry name" value="Q_tRNA_Tgt"/>
    <property type="match status" value="1"/>
</dbReference>
<dbReference type="InterPro" id="IPR050076">
    <property type="entry name" value="ArchSynthase1/Queuine_TRR"/>
</dbReference>
<dbReference type="InterPro" id="IPR004803">
    <property type="entry name" value="TGT"/>
</dbReference>
<dbReference type="InterPro" id="IPR036511">
    <property type="entry name" value="TGT-like_sf"/>
</dbReference>
<dbReference type="InterPro" id="IPR002616">
    <property type="entry name" value="tRNA_ribo_trans-like"/>
</dbReference>
<dbReference type="NCBIfam" id="TIGR00430">
    <property type="entry name" value="Q_tRNA_tgt"/>
    <property type="match status" value="1"/>
</dbReference>
<dbReference type="NCBIfam" id="TIGR00449">
    <property type="entry name" value="tgt_general"/>
    <property type="match status" value="1"/>
</dbReference>
<dbReference type="PANTHER" id="PTHR46499">
    <property type="entry name" value="QUEUINE TRNA-RIBOSYLTRANSFERASE"/>
    <property type="match status" value="1"/>
</dbReference>
<dbReference type="PANTHER" id="PTHR46499:SF1">
    <property type="entry name" value="QUEUINE TRNA-RIBOSYLTRANSFERASE"/>
    <property type="match status" value="1"/>
</dbReference>
<dbReference type="Pfam" id="PF01702">
    <property type="entry name" value="TGT"/>
    <property type="match status" value="1"/>
</dbReference>
<dbReference type="SUPFAM" id="SSF51713">
    <property type="entry name" value="tRNA-guanine transglycosylase"/>
    <property type="match status" value="1"/>
</dbReference>
<reference key="1">
    <citation type="journal article" date="2009" name="BMC Genomics">
        <title>Pseudogene accumulation in the evolutionary histories of Salmonella enterica serovars Paratyphi A and Typhi.</title>
        <authorList>
            <person name="Holt K.E."/>
            <person name="Thomson N.R."/>
            <person name="Wain J."/>
            <person name="Langridge G.C."/>
            <person name="Hasan R."/>
            <person name="Bhutta Z.A."/>
            <person name="Quail M.A."/>
            <person name="Norbertczak H."/>
            <person name="Walker D."/>
            <person name="Simmonds M."/>
            <person name="White B."/>
            <person name="Bason N."/>
            <person name="Mungall K."/>
            <person name="Dougan G."/>
            <person name="Parkhill J."/>
        </authorList>
    </citation>
    <scope>NUCLEOTIDE SEQUENCE [LARGE SCALE GENOMIC DNA]</scope>
    <source>
        <strain>AKU_12601</strain>
    </source>
</reference>
<organism>
    <name type="scientific">Salmonella paratyphi A (strain AKU_12601)</name>
    <dbReference type="NCBI Taxonomy" id="554290"/>
    <lineage>
        <taxon>Bacteria</taxon>
        <taxon>Pseudomonadati</taxon>
        <taxon>Pseudomonadota</taxon>
        <taxon>Gammaproteobacteria</taxon>
        <taxon>Enterobacterales</taxon>
        <taxon>Enterobacteriaceae</taxon>
        <taxon>Salmonella</taxon>
    </lineage>
</organism>
<gene>
    <name evidence="1" type="primary">tgt</name>
    <name type="ordered locus">SSPA2161</name>
</gene>
<evidence type="ECO:0000255" key="1">
    <source>
        <dbReference type="HAMAP-Rule" id="MF_00168"/>
    </source>
</evidence>
<accession>B5BDC8</accession>
<name>TGT_SALPK</name>
<sequence>MKFELDTTDGRARRGRLVFDRGVVETPAFMPVGTYGTVKGMTPEEVEATGAQIILGNTFHLWLRPGQEIMKLHGDLHDFMQWKGPILTDSGGFQVFSLGDIRKITEQGVHFRNPINGDPIFLDPEKSMEIQYDLGSDIVMIFDECTPYPADWDYAKRSMEMSLRWAKRSRDRFDSLGNKNALFGIIQGSVYEDLRDISVKGLVEIGFDGYAVGGLAVGEPKADMHRILEHVCPQLPADKPRYLMGVGKPEDLVEGVRRGIDMFDCVMPTRNARNGHLFVTDGVVKIRNAKHKSDTSPLDAECDCYTCRNYSRAYLHHLDRCNEILGARLNTIHNLRYYQRLMAGLRKAIEEGKLESFVTEFYQRQGRPVPPLNVD</sequence>
<keyword id="KW-0328">Glycosyltransferase</keyword>
<keyword id="KW-0479">Metal-binding</keyword>
<keyword id="KW-0671">Queuosine biosynthesis</keyword>
<keyword id="KW-0808">Transferase</keyword>
<keyword id="KW-0819">tRNA processing</keyword>
<keyword id="KW-0862">Zinc</keyword>
<protein>
    <recommendedName>
        <fullName evidence="1">Queuine tRNA-ribosyltransferase</fullName>
        <ecNumber evidence="1">2.4.2.29</ecNumber>
    </recommendedName>
    <alternativeName>
        <fullName evidence="1">Guanine insertion enzyme</fullName>
    </alternativeName>
    <alternativeName>
        <fullName evidence="1">tRNA-guanine transglycosylase</fullName>
    </alternativeName>
</protein>
<feature type="chain" id="PRO_1000097563" description="Queuine tRNA-ribosyltransferase">
    <location>
        <begin position="1"/>
        <end position="375"/>
    </location>
</feature>
<feature type="region of interest" description="RNA binding" evidence="1">
    <location>
        <begin position="245"/>
        <end position="251"/>
    </location>
</feature>
<feature type="region of interest" description="RNA binding; important for wobble base 34 recognition" evidence="1">
    <location>
        <begin position="269"/>
        <end position="273"/>
    </location>
</feature>
<feature type="active site" description="Proton acceptor" evidence="1">
    <location>
        <position position="89"/>
    </location>
</feature>
<feature type="active site" description="Nucleophile" evidence="1">
    <location>
        <position position="264"/>
    </location>
</feature>
<feature type="binding site" evidence="1">
    <location>
        <begin position="89"/>
        <end position="93"/>
    </location>
    <ligand>
        <name>substrate</name>
    </ligand>
</feature>
<feature type="binding site" evidence="1">
    <location>
        <position position="143"/>
    </location>
    <ligand>
        <name>substrate</name>
    </ligand>
</feature>
<feature type="binding site" evidence="1">
    <location>
        <position position="187"/>
    </location>
    <ligand>
        <name>substrate</name>
    </ligand>
</feature>
<feature type="binding site" evidence="1">
    <location>
        <position position="214"/>
    </location>
    <ligand>
        <name>substrate</name>
    </ligand>
</feature>
<feature type="binding site" evidence="1">
    <location>
        <position position="302"/>
    </location>
    <ligand>
        <name>Zn(2+)</name>
        <dbReference type="ChEBI" id="CHEBI:29105"/>
    </ligand>
</feature>
<feature type="binding site" evidence="1">
    <location>
        <position position="304"/>
    </location>
    <ligand>
        <name>Zn(2+)</name>
        <dbReference type="ChEBI" id="CHEBI:29105"/>
    </ligand>
</feature>
<feature type="binding site" evidence="1">
    <location>
        <position position="307"/>
    </location>
    <ligand>
        <name>Zn(2+)</name>
        <dbReference type="ChEBI" id="CHEBI:29105"/>
    </ligand>
</feature>
<feature type="binding site" evidence="1">
    <location>
        <position position="333"/>
    </location>
    <ligand>
        <name>Zn(2+)</name>
        <dbReference type="ChEBI" id="CHEBI:29105"/>
    </ligand>
</feature>